<evidence type="ECO:0000255" key="1">
    <source>
        <dbReference type="HAMAP-Rule" id="MF_01227"/>
    </source>
</evidence>
<dbReference type="EC" id="6.3.4.2" evidence="1"/>
<dbReference type="EMBL" id="CP000238">
    <property type="protein sequence ID" value="ABF13830.1"/>
    <property type="molecule type" value="Genomic_DNA"/>
</dbReference>
<dbReference type="RefSeq" id="WP_011520410.1">
    <property type="nucleotide sequence ID" value="NC_007984.1"/>
</dbReference>
<dbReference type="SMR" id="Q1LTN7"/>
<dbReference type="STRING" id="374463.BCI_0222"/>
<dbReference type="KEGG" id="bci:BCI_0222"/>
<dbReference type="HOGENOM" id="CLU_011675_5_0_6"/>
<dbReference type="OrthoDB" id="9801107at2"/>
<dbReference type="UniPathway" id="UPA00159">
    <property type="reaction ID" value="UER00277"/>
</dbReference>
<dbReference type="Proteomes" id="UP000002427">
    <property type="component" value="Chromosome"/>
</dbReference>
<dbReference type="GO" id="GO:0005829">
    <property type="term" value="C:cytosol"/>
    <property type="evidence" value="ECO:0007669"/>
    <property type="project" value="TreeGrafter"/>
</dbReference>
<dbReference type="GO" id="GO:0005524">
    <property type="term" value="F:ATP binding"/>
    <property type="evidence" value="ECO:0007669"/>
    <property type="project" value="UniProtKB-KW"/>
</dbReference>
<dbReference type="GO" id="GO:0003883">
    <property type="term" value="F:CTP synthase activity"/>
    <property type="evidence" value="ECO:0007669"/>
    <property type="project" value="UniProtKB-UniRule"/>
</dbReference>
<dbReference type="GO" id="GO:0004359">
    <property type="term" value="F:glutaminase activity"/>
    <property type="evidence" value="ECO:0007669"/>
    <property type="project" value="RHEA"/>
</dbReference>
<dbReference type="GO" id="GO:0042802">
    <property type="term" value="F:identical protein binding"/>
    <property type="evidence" value="ECO:0007669"/>
    <property type="project" value="TreeGrafter"/>
</dbReference>
<dbReference type="GO" id="GO:0046872">
    <property type="term" value="F:metal ion binding"/>
    <property type="evidence" value="ECO:0007669"/>
    <property type="project" value="UniProtKB-KW"/>
</dbReference>
<dbReference type="GO" id="GO:0044210">
    <property type="term" value="P:'de novo' CTP biosynthetic process"/>
    <property type="evidence" value="ECO:0007669"/>
    <property type="project" value="UniProtKB-UniRule"/>
</dbReference>
<dbReference type="GO" id="GO:0019856">
    <property type="term" value="P:pyrimidine nucleobase biosynthetic process"/>
    <property type="evidence" value="ECO:0007669"/>
    <property type="project" value="TreeGrafter"/>
</dbReference>
<dbReference type="CDD" id="cd03113">
    <property type="entry name" value="CTPS_N"/>
    <property type="match status" value="1"/>
</dbReference>
<dbReference type="CDD" id="cd01746">
    <property type="entry name" value="GATase1_CTP_Synthase"/>
    <property type="match status" value="1"/>
</dbReference>
<dbReference type="FunFam" id="3.40.50.300:FF:000009">
    <property type="entry name" value="CTP synthase"/>
    <property type="match status" value="1"/>
</dbReference>
<dbReference type="FunFam" id="3.40.50.880:FF:000002">
    <property type="entry name" value="CTP synthase"/>
    <property type="match status" value="1"/>
</dbReference>
<dbReference type="Gene3D" id="3.40.50.880">
    <property type="match status" value="1"/>
</dbReference>
<dbReference type="Gene3D" id="3.40.50.300">
    <property type="entry name" value="P-loop containing nucleotide triphosphate hydrolases"/>
    <property type="match status" value="1"/>
</dbReference>
<dbReference type="HAMAP" id="MF_01227">
    <property type="entry name" value="PyrG"/>
    <property type="match status" value="1"/>
</dbReference>
<dbReference type="InterPro" id="IPR029062">
    <property type="entry name" value="Class_I_gatase-like"/>
</dbReference>
<dbReference type="InterPro" id="IPR004468">
    <property type="entry name" value="CTP_synthase"/>
</dbReference>
<dbReference type="InterPro" id="IPR017456">
    <property type="entry name" value="CTP_synthase_N"/>
</dbReference>
<dbReference type="InterPro" id="IPR017926">
    <property type="entry name" value="GATASE"/>
</dbReference>
<dbReference type="InterPro" id="IPR033828">
    <property type="entry name" value="GATase1_CTP_Synthase"/>
</dbReference>
<dbReference type="InterPro" id="IPR027417">
    <property type="entry name" value="P-loop_NTPase"/>
</dbReference>
<dbReference type="NCBIfam" id="NF003792">
    <property type="entry name" value="PRK05380.1"/>
    <property type="match status" value="1"/>
</dbReference>
<dbReference type="NCBIfam" id="TIGR00337">
    <property type="entry name" value="PyrG"/>
    <property type="match status" value="1"/>
</dbReference>
<dbReference type="PANTHER" id="PTHR11550">
    <property type="entry name" value="CTP SYNTHASE"/>
    <property type="match status" value="1"/>
</dbReference>
<dbReference type="PANTHER" id="PTHR11550:SF0">
    <property type="entry name" value="CTP SYNTHASE-RELATED"/>
    <property type="match status" value="1"/>
</dbReference>
<dbReference type="Pfam" id="PF06418">
    <property type="entry name" value="CTP_synth_N"/>
    <property type="match status" value="1"/>
</dbReference>
<dbReference type="Pfam" id="PF00117">
    <property type="entry name" value="GATase"/>
    <property type="match status" value="1"/>
</dbReference>
<dbReference type="SUPFAM" id="SSF52317">
    <property type="entry name" value="Class I glutamine amidotransferase-like"/>
    <property type="match status" value="1"/>
</dbReference>
<dbReference type="SUPFAM" id="SSF52540">
    <property type="entry name" value="P-loop containing nucleoside triphosphate hydrolases"/>
    <property type="match status" value="1"/>
</dbReference>
<dbReference type="PROSITE" id="PS51273">
    <property type="entry name" value="GATASE_TYPE_1"/>
    <property type="match status" value="1"/>
</dbReference>
<reference key="1">
    <citation type="journal article" date="2006" name="PLoS Biol.">
        <title>Metabolic complementarity and genomics of the dual bacterial symbiosis of sharpshooters.</title>
        <authorList>
            <person name="Wu D."/>
            <person name="Daugherty S.C."/>
            <person name="Van Aken S.E."/>
            <person name="Pai G.H."/>
            <person name="Watkins K.L."/>
            <person name="Khouri H."/>
            <person name="Tallon L.J."/>
            <person name="Zaborsky J.M."/>
            <person name="Dunbar H.E."/>
            <person name="Tran P.L."/>
            <person name="Moran N.A."/>
            <person name="Eisen J.A."/>
        </authorList>
    </citation>
    <scope>NUCLEOTIDE SEQUENCE [LARGE SCALE GENOMIC DNA]</scope>
</reference>
<comment type="function">
    <text evidence="1">Catalyzes the ATP-dependent amination of UTP to CTP with either L-glutamine or ammonia as the source of nitrogen. Regulates intracellular CTP levels through interactions with the four ribonucleotide triphosphates.</text>
</comment>
<comment type="catalytic activity">
    <reaction evidence="1">
        <text>UTP + L-glutamine + ATP + H2O = CTP + L-glutamate + ADP + phosphate + 2 H(+)</text>
        <dbReference type="Rhea" id="RHEA:26426"/>
        <dbReference type="ChEBI" id="CHEBI:15377"/>
        <dbReference type="ChEBI" id="CHEBI:15378"/>
        <dbReference type="ChEBI" id="CHEBI:29985"/>
        <dbReference type="ChEBI" id="CHEBI:30616"/>
        <dbReference type="ChEBI" id="CHEBI:37563"/>
        <dbReference type="ChEBI" id="CHEBI:43474"/>
        <dbReference type="ChEBI" id="CHEBI:46398"/>
        <dbReference type="ChEBI" id="CHEBI:58359"/>
        <dbReference type="ChEBI" id="CHEBI:456216"/>
        <dbReference type="EC" id="6.3.4.2"/>
    </reaction>
</comment>
<comment type="catalytic activity">
    <reaction evidence="1">
        <text>L-glutamine + H2O = L-glutamate + NH4(+)</text>
        <dbReference type="Rhea" id="RHEA:15889"/>
        <dbReference type="ChEBI" id="CHEBI:15377"/>
        <dbReference type="ChEBI" id="CHEBI:28938"/>
        <dbReference type="ChEBI" id="CHEBI:29985"/>
        <dbReference type="ChEBI" id="CHEBI:58359"/>
    </reaction>
</comment>
<comment type="catalytic activity">
    <reaction evidence="1">
        <text>UTP + NH4(+) + ATP = CTP + ADP + phosphate + 2 H(+)</text>
        <dbReference type="Rhea" id="RHEA:16597"/>
        <dbReference type="ChEBI" id="CHEBI:15378"/>
        <dbReference type="ChEBI" id="CHEBI:28938"/>
        <dbReference type="ChEBI" id="CHEBI:30616"/>
        <dbReference type="ChEBI" id="CHEBI:37563"/>
        <dbReference type="ChEBI" id="CHEBI:43474"/>
        <dbReference type="ChEBI" id="CHEBI:46398"/>
        <dbReference type="ChEBI" id="CHEBI:456216"/>
    </reaction>
</comment>
<comment type="activity regulation">
    <text evidence="1">Allosterically activated by GTP, when glutamine is the substrate; GTP has no effect on the reaction when ammonia is the substrate. The allosteric effector GTP functions by stabilizing the protein conformation that binds the tetrahedral intermediate(s) formed during glutamine hydrolysis. Inhibited by the product CTP, via allosteric rather than competitive inhibition.</text>
</comment>
<comment type="pathway">
    <text evidence="1">Pyrimidine metabolism; CTP biosynthesis via de novo pathway; CTP from UDP: step 2/2.</text>
</comment>
<comment type="subunit">
    <text evidence="1">Homotetramer.</text>
</comment>
<comment type="miscellaneous">
    <text evidence="1">CTPSs have evolved a hybrid strategy for distinguishing between UTP and CTP. The overlapping regions of the product feedback inhibitory and substrate sites recognize a common feature in both compounds, the triphosphate moiety. To differentiate isosteric substrate and product pyrimidine rings, an additional pocket far from the expected kinase/ligase catalytic site, specifically recognizes the cytosine and ribose portions of the product inhibitor.</text>
</comment>
<comment type="similarity">
    <text evidence="1">Belongs to the CTP synthase family.</text>
</comment>
<accession>Q1LTN7</accession>
<name>PYRG_BAUCH</name>
<keyword id="KW-0067">ATP-binding</keyword>
<keyword id="KW-0315">Glutamine amidotransferase</keyword>
<keyword id="KW-0436">Ligase</keyword>
<keyword id="KW-0460">Magnesium</keyword>
<keyword id="KW-0479">Metal-binding</keyword>
<keyword id="KW-0547">Nucleotide-binding</keyword>
<keyword id="KW-0665">Pyrimidine biosynthesis</keyword>
<keyword id="KW-1185">Reference proteome</keyword>
<sequence>MKTNYIFVTGGVVSSLGKGIAVASLAAILEARGLKVTIMKLDPYINVDPGTISPIQHGEVFVTEDGAETDLDLGHYERFIRTKMSRRNNFTTGRIYFDVLHKERRGDYLGATIQVIPHITNTIKQRIIECGEGHDVVLVEIGGTVGDIESLPFLEAIRQMAGEVGRDHTLYMHLTLVPYIKAAGEVKTKPTQHSVKELLSIGIQPDVLICRSDRAVPSNERAKIALFCNVSEKAVISLKDVDSIYKIPALLKSQYLDDYICERFSLKCPKANLSEWEQVIYQQANPVGEVTVGIVGKYIDLPDAYKSVIEALHHAGLKNRIAVNICLIHSQDVETRSVKILQDLDAILIPGGFGYRGVEGKIMTAQYAREKQIPYLGICLGMQVAIVEFARHVAGMPEANSTEFVSDCKYPVVALITEWYEENNNRKLSNLGGTMRLGSQPCKLTYGSLAYQIYGKTIIMERHRHRYEVNNMLLKQIEAAGLRVAGLSEDYKLVEMIEYPAHPWFIASQFHPEFNSTPRDGHPLFTGFIKAASEYQKKQLNKM</sequence>
<gene>
    <name evidence="1" type="primary">pyrG</name>
    <name type="ordered locus">BCI_0222</name>
</gene>
<organism>
    <name type="scientific">Baumannia cicadellinicola subsp. Homalodisca coagulata</name>
    <dbReference type="NCBI Taxonomy" id="374463"/>
    <lineage>
        <taxon>Bacteria</taxon>
        <taxon>Pseudomonadati</taxon>
        <taxon>Pseudomonadota</taxon>
        <taxon>Gammaproteobacteria</taxon>
        <taxon>Candidatus Palibaumannia</taxon>
    </lineage>
</organism>
<proteinExistence type="inferred from homology"/>
<feature type="chain" id="PRO_0000266067" description="CTP synthase">
    <location>
        <begin position="1"/>
        <end position="543"/>
    </location>
</feature>
<feature type="domain" description="Glutamine amidotransferase type-1" evidence="1">
    <location>
        <begin position="291"/>
        <end position="538"/>
    </location>
</feature>
<feature type="region of interest" description="Amidoligase domain" evidence="1">
    <location>
        <begin position="1"/>
        <end position="266"/>
    </location>
</feature>
<feature type="active site" description="Nucleophile; for glutamine hydrolysis" evidence="1">
    <location>
        <position position="379"/>
    </location>
</feature>
<feature type="active site" evidence="1">
    <location>
        <position position="511"/>
    </location>
</feature>
<feature type="active site" evidence="1">
    <location>
        <position position="513"/>
    </location>
</feature>
<feature type="binding site" evidence="1">
    <location>
        <position position="14"/>
    </location>
    <ligand>
        <name>CTP</name>
        <dbReference type="ChEBI" id="CHEBI:37563"/>
        <note>allosteric inhibitor</note>
    </ligand>
</feature>
<feature type="binding site" evidence="1">
    <location>
        <position position="14"/>
    </location>
    <ligand>
        <name>UTP</name>
        <dbReference type="ChEBI" id="CHEBI:46398"/>
    </ligand>
</feature>
<feature type="binding site" evidence="1">
    <location>
        <begin position="15"/>
        <end position="20"/>
    </location>
    <ligand>
        <name>ATP</name>
        <dbReference type="ChEBI" id="CHEBI:30616"/>
    </ligand>
</feature>
<feature type="binding site" evidence="1">
    <location>
        <position position="72"/>
    </location>
    <ligand>
        <name>ATP</name>
        <dbReference type="ChEBI" id="CHEBI:30616"/>
    </ligand>
</feature>
<feature type="binding site" evidence="1">
    <location>
        <position position="72"/>
    </location>
    <ligand>
        <name>Mg(2+)</name>
        <dbReference type="ChEBI" id="CHEBI:18420"/>
    </ligand>
</feature>
<feature type="binding site" evidence="1">
    <location>
        <position position="140"/>
    </location>
    <ligand>
        <name>Mg(2+)</name>
        <dbReference type="ChEBI" id="CHEBI:18420"/>
    </ligand>
</feature>
<feature type="binding site" evidence="1">
    <location>
        <begin position="147"/>
        <end position="149"/>
    </location>
    <ligand>
        <name>CTP</name>
        <dbReference type="ChEBI" id="CHEBI:37563"/>
        <note>allosteric inhibitor</note>
    </ligand>
</feature>
<feature type="binding site" evidence="1">
    <location>
        <begin position="187"/>
        <end position="192"/>
    </location>
    <ligand>
        <name>CTP</name>
        <dbReference type="ChEBI" id="CHEBI:37563"/>
        <note>allosteric inhibitor</note>
    </ligand>
</feature>
<feature type="binding site" evidence="1">
    <location>
        <begin position="187"/>
        <end position="192"/>
    </location>
    <ligand>
        <name>UTP</name>
        <dbReference type="ChEBI" id="CHEBI:46398"/>
    </ligand>
</feature>
<feature type="binding site" evidence="1">
    <location>
        <position position="223"/>
    </location>
    <ligand>
        <name>CTP</name>
        <dbReference type="ChEBI" id="CHEBI:37563"/>
        <note>allosteric inhibitor</note>
    </ligand>
</feature>
<feature type="binding site" evidence="1">
    <location>
        <position position="223"/>
    </location>
    <ligand>
        <name>UTP</name>
        <dbReference type="ChEBI" id="CHEBI:46398"/>
    </ligand>
</feature>
<feature type="binding site" evidence="1">
    <location>
        <begin position="239"/>
        <end position="241"/>
    </location>
    <ligand>
        <name>ATP</name>
        <dbReference type="ChEBI" id="CHEBI:30616"/>
    </ligand>
</feature>
<feature type="binding site" evidence="1">
    <location>
        <position position="352"/>
    </location>
    <ligand>
        <name>L-glutamine</name>
        <dbReference type="ChEBI" id="CHEBI:58359"/>
    </ligand>
</feature>
<feature type="binding site" evidence="1">
    <location>
        <begin position="380"/>
        <end position="383"/>
    </location>
    <ligand>
        <name>L-glutamine</name>
        <dbReference type="ChEBI" id="CHEBI:58359"/>
    </ligand>
</feature>
<feature type="binding site" evidence="1">
    <location>
        <position position="403"/>
    </location>
    <ligand>
        <name>L-glutamine</name>
        <dbReference type="ChEBI" id="CHEBI:58359"/>
    </ligand>
</feature>
<feature type="binding site" evidence="1">
    <location>
        <position position="466"/>
    </location>
    <ligand>
        <name>L-glutamine</name>
        <dbReference type="ChEBI" id="CHEBI:58359"/>
    </ligand>
</feature>
<protein>
    <recommendedName>
        <fullName evidence="1">CTP synthase</fullName>
        <ecNumber evidence="1">6.3.4.2</ecNumber>
    </recommendedName>
    <alternativeName>
        <fullName evidence="1">Cytidine 5'-triphosphate synthase</fullName>
    </alternativeName>
    <alternativeName>
        <fullName evidence="1">Cytidine triphosphate synthetase</fullName>
        <shortName evidence="1">CTP synthetase</shortName>
        <shortName evidence="1">CTPS</shortName>
    </alternativeName>
    <alternativeName>
        <fullName evidence="1">UTP--ammonia ligase</fullName>
    </alternativeName>
</protein>